<gene>
    <name evidence="8" type="primary">Pink1</name>
    <name evidence="10" type="ORF">Phum_PHUM577390</name>
</gene>
<reference evidence="11" key="1">
    <citation type="journal article" date="2010" name="Proc. Natl. Acad. Sci. U.S.A.">
        <title>Genome sequences of the human body louse and its primary endosymbiont provide insights into the permanent parasitic lifestyle.</title>
        <authorList>
            <person name="Kirkness E.F."/>
            <person name="Haas B.J."/>
            <person name="Sun W."/>
            <person name="Braig H.R."/>
            <person name="Perotti M.A."/>
            <person name="Clark J.M."/>
            <person name="Lee S.H."/>
            <person name="Robertson H.M."/>
            <person name="Kennedy R.C."/>
            <person name="Elhaik E."/>
            <person name="Gerlach D."/>
            <person name="Kriventseva E.V."/>
            <person name="Elsik C.G."/>
            <person name="Graur D."/>
            <person name="Hill C.A."/>
            <person name="Veenstra J.A."/>
            <person name="Walenz B."/>
            <person name="Tubio J.M."/>
            <person name="Ribeiro J.M."/>
            <person name="Rozas J."/>
            <person name="Johnston J.S."/>
            <person name="Reese J.T."/>
            <person name="Popadic A."/>
            <person name="Tojo M."/>
            <person name="Raoult D."/>
            <person name="Reed D.L."/>
            <person name="Tomoyasu Y."/>
            <person name="Krause E."/>
            <person name="Mittapalli O."/>
            <person name="Margam V.M."/>
            <person name="Li H.M."/>
            <person name="Meyer J.M."/>
            <person name="Johnson R.M."/>
            <person name="Romero-Severson J."/>
            <person name="Vanzee J.P."/>
            <person name="Alvarez-Ponce D."/>
            <person name="Vieira F.G."/>
            <person name="Aguade M."/>
            <person name="Guirao-Rico S."/>
            <person name="Anzola J.M."/>
            <person name="Yoon K.S."/>
            <person name="Strycharz J.P."/>
            <person name="Unger M.F."/>
            <person name="Christley S."/>
            <person name="Lobo N.F."/>
            <person name="Seufferheld M.J."/>
            <person name="Wang N."/>
            <person name="Dasch G.A."/>
            <person name="Struchiner C.J."/>
            <person name="Madey G."/>
            <person name="Hannick L.I."/>
            <person name="Bidwell S."/>
            <person name="Joardar V."/>
            <person name="Caler E."/>
            <person name="Shao R."/>
            <person name="Barker S.C."/>
            <person name="Cameron S."/>
            <person name="Bruggner R.V."/>
            <person name="Regier A."/>
            <person name="Johnson J."/>
            <person name="Viswanathan L."/>
            <person name="Utterback T.R."/>
            <person name="Sutton G.G."/>
            <person name="Lawson D."/>
            <person name="Waterhouse R.M."/>
            <person name="Venter J.C."/>
            <person name="Strausberg R.L."/>
            <person name="Berenbaum M.R."/>
            <person name="Collins F.H."/>
            <person name="Zdobnov E.M."/>
            <person name="Pittendrigh B.R."/>
        </authorList>
    </citation>
    <scope>NUCLEOTIDE SEQUENCE [LARGE SCALE GENOMIC DNA]</scope>
    <source>
        <strain evidence="11">USDA</strain>
    </source>
</reference>
<reference evidence="9" key="2">
    <citation type="journal article" date="2011" name="Open Biol.">
        <title>Discovery of catalytically active orthologues of the Parkinson's disease kinase PINK1: analysis of substrate specificity and impact of mutations.</title>
        <authorList>
            <person name="Woodroof H.I."/>
            <person name="Pogson J.H."/>
            <person name="Begley M."/>
            <person name="Cantley L.C."/>
            <person name="Deak M."/>
            <person name="Campbell D.G."/>
            <person name="van Aalten D.M."/>
            <person name="Whitworth A.J."/>
            <person name="Alessi D.R."/>
            <person name="Muqit M.M."/>
        </authorList>
    </citation>
    <scope>FUNCTION</scope>
    <scope>CATALYTIC ACTIVITY</scope>
    <scope>COFACTOR</scope>
    <scope>PHOSPHORYLATION</scope>
    <scope>MUTAGENESIS OF ASP-357</scope>
</reference>
<reference evidence="9" key="3">
    <citation type="journal article" date="2015" name="Nature">
        <title>Mechanism of phospho-ubiquitin-induced PARKIN activation.</title>
        <authorList>
            <person name="Wauer T."/>
            <person name="Simicek M."/>
            <person name="Schubert A."/>
            <person name="Komander D."/>
        </authorList>
    </citation>
    <scope>FUNCTION</scope>
</reference>
<reference evidence="9" key="4">
    <citation type="journal article" date="2015" name="Nature">
        <authorList>
            <person name="Wauer T."/>
            <person name="Simicek M."/>
            <person name="Schubert A."/>
            <person name="Komander D."/>
        </authorList>
    </citation>
    <scope>ERRATUM OF PUBMED:26161729</scope>
</reference>
<reference evidence="12" key="5">
    <citation type="journal article" date="2017" name="Nature">
        <title>Structure of PINK1 in complex with its substrate ubiquitin.</title>
        <authorList>
            <person name="Schubert A.F."/>
            <person name="Gladkova C."/>
            <person name="Pardon E."/>
            <person name="Wagstaff J.L."/>
            <person name="Freund S.M.V."/>
            <person name="Steyaert J."/>
            <person name="Maslen S.L."/>
            <person name="Komander D."/>
        </authorList>
    </citation>
    <scope>X-RAY CRYSTALLOGRAPHY (3.10 ANGSTROMS) OF 143-575 IN COMPLEX WITH UBIQUITIN</scope>
    <scope>FUNCTION</scope>
    <scope>CATALYTIC ACTIVITY</scope>
    <scope>COFACTOR</scope>
    <scope>PHOSPHORYLATION AT SER-202; SER-204 AND THR-305</scope>
    <scope>MUTAGENESIS OF TYR-198; 202-SER--SER-204; PRO-268; GLY-281; 282-ARG-ASN-283; ASP-379 AND GLY-382</scope>
</reference>
<protein>
    <recommendedName>
        <fullName evidence="8">Serine/threonine-protein kinase Pink1, mitochondrial</fullName>
        <ecNumber evidence="5 7">2.7.11.1</ecNumber>
    </recommendedName>
    <alternativeName>
        <fullName evidence="8">PTEN-induced putative kinase 1</fullName>
    </alternativeName>
</protein>
<sequence>MSLLAYTNLLLQNGRIFRYYKKANIKKFIKKIIKLDLKSTPSEASVSRQTFLSTGLNSVKNAVQLQARKLLINNVLERVTPTLNSDLKKKAAKRLFYGDSAPFFALVGVSLASGSGLLTKDDELEGICWEIREAVSKGKWNDSESENVEQLQAANLDELDLGEPIAKGCNAVVYSAKLKNVQSNKLAHQLAVKMMFNYDVESNSTAILKAMYRETVPAMSYFFNQNLFNIENISDFKIRLPPHPNIVRMYSVFADRIPDLQCNKQLYPEALPPRINPEGSGRNMSLFLVMKRYDCTLKEYLRDKTPNMRSSILLLSQLLEAVAHMNIHNISHRDLKSDNILVDLSEGDAYPTIVITDFGCCLCDKQNGLVIPYRSEDQDKGGNRALMAPEIANAKPGTFSWLNYKKSDLWAVGAIAYEIFNIDNPFYDKTMKLLSKSYKEEDLPELPDTIPFIIRNLVSNMLSRSTNKRLDCDVAATVAQLYLWAPSSWLKENYTLPNSNEIIQWLLCLSSKVLCERDITARNKTNTMSESVSKAQYKGRRSLPEYELIASFLRRVRLHLVRKGLKWIQELHIYN</sequence>
<organism evidence="11">
    <name type="scientific">Pediculus humanus subsp. corporis</name>
    <name type="common">Body louse</name>
    <dbReference type="NCBI Taxonomy" id="121224"/>
    <lineage>
        <taxon>Eukaryota</taxon>
        <taxon>Metazoa</taxon>
        <taxon>Ecdysozoa</taxon>
        <taxon>Arthropoda</taxon>
        <taxon>Hexapoda</taxon>
        <taxon>Insecta</taxon>
        <taxon>Pterygota</taxon>
        <taxon>Neoptera</taxon>
        <taxon>Paraneoptera</taxon>
        <taxon>Psocodea</taxon>
        <taxon>Phthiraptera</taxon>
        <taxon>Anoplura</taxon>
        <taxon>Pediculidae</taxon>
        <taxon>Pediculus</taxon>
    </lineage>
</organism>
<evidence type="ECO:0000250" key="1">
    <source>
        <dbReference type="UniProtKB" id="D6WMX4"/>
    </source>
</evidence>
<evidence type="ECO:0000250" key="2">
    <source>
        <dbReference type="UniProtKB" id="Q0KHV6"/>
    </source>
</evidence>
<evidence type="ECO:0000255" key="3"/>
<evidence type="ECO:0000255" key="4">
    <source>
        <dbReference type="PROSITE-ProRule" id="PRU00159"/>
    </source>
</evidence>
<evidence type="ECO:0000269" key="5">
    <source>
    </source>
</evidence>
<evidence type="ECO:0000269" key="6">
    <source>
    </source>
</evidence>
<evidence type="ECO:0000269" key="7">
    <source>
    </source>
</evidence>
<evidence type="ECO:0000303" key="8">
    <source>
    </source>
</evidence>
<evidence type="ECO:0000305" key="9"/>
<evidence type="ECO:0000312" key="10">
    <source>
        <dbReference type="EMBL" id="EEB19487.1"/>
    </source>
</evidence>
<evidence type="ECO:0000312" key="11">
    <source>
        <dbReference type="Proteomes" id="UP000009046"/>
    </source>
</evidence>
<evidence type="ECO:0007744" key="12">
    <source>
        <dbReference type="PDB" id="6EQI"/>
    </source>
</evidence>
<evidence type="ECO:0007829" key="13">
    <source>
        <dbReference type="PDB" id="6EQI"/>
    </source>
</evidence>
<evidence type="ECO:0007829" key="14">
    <source>
        <dbReference type="PDB" id="7T4K"/>
    </source>
</evidence>
<evidence type="ECO:0007829" key="15">
    <source>
        <dbReference type="PDB" id="7T4M"/>
    </source>
</evidence>
<evidence type="ECO:0007829" key="16">
    <source>
        <dbReference type="PDB" id="7T4N"/>
    </source>
</evidence>
<evidence type="ECO:0007829" key="17">
    <source>
        <dbReference type="PDB" id="8UYH"/>
    </source>
</evidence>
<evidence type="ECO:0007829" key="18">
    <source>
        <dbReference type="PDB" id="8UYI"/>
    </source>
</evidence>
<keyword id="KW-0002">3D-structure</keyword>
<keyword id="KW-0067">ATP-binding</keyword>
<keyword id="KW-0072">Autophagy</keyword>
<keyword id="KW-0963">Cytoplasm</keyword>
<keyword id="KW-0418">Kinase</keyword>
<keyword id="KW-0460">Magnesium</keyword>
<keyword id="KW-0472">Membrane</keyword>
<keyword id="KW-0479">Metal-binding</keyword>
<keyword id="KW-0496">Mitochondrion</keyword>
<keyword id="KW-0999">Mitochondrion inner membrane</keyword>
<keyword id="KW-1000">Mitochondrion outer membrane</keyword>
<keyword id="KW-0547">Nucleotide-binding</keyword>
<keyword id="KW-0597">Phosphoprotein</keyword>
<keyword id="KW-1185">Reference proteome</keyword>
<keyword id="KW-0723">Serine/threonine-protein kinase</keyword>
<keyword id="KW-0808">Transferase</keyword>
<keyword id="KW-0809">Transit peptide</keyword>
<keyword id="KW-0812">Transmembrane</keyword>
<keyword id="KW-1133">Transmembrane helix</keyword>
<proteinExistence type="evidence at protein level"/>
<feature type="transit peptide" description="Mitochondrion" evidence="3">
    <location>
        <begin position="1"/>
        <end position="51"/>
    </location>
</feature>
<feature type="chain" id="PRO_0000454927" description="Serine/threonine-protein kinase Pink1, mitochondrial" evidence="3">
    <location>
        <begin position="52"/>
        <end position="575"/>
    </location>
</feature>
<feature type="topological domain" description="Mitochondrial intermembrane" evidence="9">
    <location>
        <begin position="52"/>
        <end position="94"/>
    </location>
</feature>
<feature type="transmembrane region" description="Helical" evidence="3">
    <location>
        <begin position="95"/>
        <end position="118"/>
    </location>
</feature>
<feature type="topological domain" description="Cytoplasmic" evidence="9">
    <location>
        <begin position="119"/>
        <end position="575"/>
    </location>
</feature>
<feature type="active site" description="Proton acceptor" evidence="4">
    <location>
        <position position="334"/>
    </location>
</feature>
<feature type="binding site" evidence="4">
    <location>
        <position position="193"/>
    </location>
    <ligand>
        <name>ATP</name>
        <dbReference type="ChEBI" id="CHEBI:30616"/>
    </ligand>
</feature>
<feature type="binding site" evidence="1">
    <location>
        <position position="214"/>
    </location>
    <ligand>
        <name>Mg(2+)</name>
        <dbReference type="ChEBI" id="CHEBI:18420"/>
        <label>1</label>
    </ligand>
</feature>
<feature type="binding site" evidence="1">
    <location>
        <position position="339"/>
    </location>
    <ligand>
        <name>Mg(2+)</name>
        <dbReference type="ChEBI" id="CHEBI:18420"/>
        <label>2</label>
    </ligand>
</feature>
<feature type="binding site" evidence="1">
    <location>
        <position position="357"/>
    </location>
    <ligand>
        <name>Mg(2+)</name>
        <dbReference type="ChEBI" id="CHEBI:18420"/>
        <label>1</label>
    </ligand>
</feature>
<feature type="binding site" evidence="1">
    <location>
        <position position="357"/>
    </location>
    <ligand>
        <name>Mg(2+)</name>
        <dbReference type="ChEBI" id="CHEBI:18420"/>
        <label>2</label>
    </ligand>
</feature>
<feature type="modified residue" description="Phosphoserine; by autocatalysis" evidence="7">
    <location>
        <position position="202"/>
    </location>
</feature>
<feature type="modified residue" description="Phosphoserine; by autocatalysis" evidence="7">
    <location>
        <position position="204"/>
    </location>
</feature>
<feature type="modified residue" description="Phosphothreonine; by autocatalysis" evidence="7">
    <location>
        <position position="305"/>
    </location>
</feature>
<feature type="mutagenesis site" description="Abolishes ubiquitin phosphorylation, but has no effect on autophosphorylation." evidence="7">
    <original>Y</original>
    <variation>E</variation>
    <location>
        <position position="198"/>
    </location>
</feature>
<feature type="mutagenesis site" description="Abolishes ubiquitin phosphorylation and displays reduced autophosphorylation." evidence="7">
    <original>SNS</original>
    <variation>ANA</variation>
    <location>
        <begin position="202"/>
        <end position="204"/>
    </location>
</feature>
<feature type="mutagenesis site" description="Reduced phosphorylation of ubiquitin, but has no effect on autophosphorylation." evidence="7">
    <original>P</original>
    <variation>L</variation>
    <location>
        <position position="268"/>
    </location>
</feature>
<feature type="mutagenesis site" description="Abolishes ubiquitin phosphorylation and reduces autophosphorylation." evidence="7">
    <original>G</original>
    <variation>D</variation>
    <location>
        <position position="281"/>
    </location>
</feature>
<feature type="mutagenesis site" description="Abolishes ubiquitin phosphorylation and displays reduced autophosphorylation." evidence="7">
    <original>RN</original>
    <variation>AA</variation>
    <location>
        <begin position="282"/>
        <end position="283"/>
    </location>
</feature>
<feature type="mutagenesis site" description="Loss of enzyme activity." evidence="5">
    <original>D</original>
    <variation>A</variation>
    <location>
        <position position="357"/>
    </location>
</feature>
<feature type="mutagenesis site" description="Reduced phosphorylation of ubiquitin, but has no effect on autophosphorylation." evidence="7">
    <original>D</original>
    <variation>A</variation>
    <location>
        <position position="379"/>
    </location>
</feature>
<feature type="mutagenesis site" description="Abolishes enzyme activity. Loss of ubiquitin phosphorylation and autophosphorylation." evidence="7">
    <original>G</original>
    <variation>V</variation>
    <location>
        <position position="382"/>
    </location>
</feature>
<feature type="helix" evidence="16">
    <location>
        <begin position="120"/>
        <end position="136"/>
    </location>
</feature>
<feature type="turn" evidence="16">
    <location>
        <begin position="149"/>
        <end position="151"/>
    </location>
</feature>
<feature type="helix" evidence="16">
    <location>
        <begin position="156"/>
        <end position="158"/>
    </location>
</feature>
<feature type="strand" evidence="17">
    <location>
        <begin position="163"/>
        <end position="167"/>
    </location>
</feature>
<feature type="strand" evidence="16">
    <location>
        <begin position="168"/>
        <end position="178"/>
    </location>
</feature>
<feature type="strand" evidence="16">
    <location>
        <begin position="189"/>
        <end position="198"/>
    </location>
</feature>
<feature type="strand" evidence="14">
    <location>
        <begin position="201"/>
        <end position="203"/>
    </location>
</feature>
<feature type="helix" evidence="16">
    <location>
        <begin position="204"/>
        <end position="214"/>
    </location>
</feature>
<feature type="turn" evidence="16">
    <location>
        <begin position="215"/>
        <end position="217"/>
    </location>
</feature>
<feature type="strand" evidence="16">
    <location>
        <begin position="221"/>
        <end position="223"/>
    </location>
</feature>
<feature type="turn" evidence="16">
    <location>
        <begin position="225"/>
        <end position="227"/>
    </location>
</feature>
<feature type="turn" evidence="16">
    <location>
        <begin position="230"/>
        <end position="235"/>
    </location>
</feature>
<feature type="strand" evidence="16">
    <location>
        <begin position="249"/>
        <end position="255"/>
    </location>
</feature>
<feature type="turn" evidence="16">
    <location>
        <begin position="258"/>
        <end position="262"/>
    </location>
</feature>
<feature type="turn" evidence="16">
    <location>
        <begin position="264"/>
        <end position="266"/>
    </location>
</feature>
<feature type="helix" evidence="13">
    <location>
        <begin position="268"/>
        <end position="270"/>
    </location>
</feature>
<feature type="turn" evidence="13">
    <location>
        <begin position="273"/>
        <end position="275"/>
    </location>
</feature>
<feature type="strand" evidence="16">
    <location>
        <begin position="283"/>
        <end position="291"/>
    </location>
</feature>
<feature type="strand" evidence="16">
    <location>
        <begin position="294"/>
        <end position="296"/>
    </location>
</feature>
<feature type="helix" evidence="16">
    <location>
        <begin position="297"/>
        <end position="303"/>
    </location>
</feature>
<feature type="helix" evidence="16">
    <location>
        <begin position="308"/>
        <end position="327"/>
    </location>
</feature>
<feature type="strand" evidence="16">
    <location>
        <begin position="339"/>
        <end position="343"/>
    </location>
</feature>
<feature type="strand" evidence="16">
    <location>
        <begin position="348"/>
        <end position="350"/>
    </location>
</feature>
<feature type="strand" evidence="16">
    <location>
        <begin position="352"/>
        <end position="355"/>
    </location>
</feature>
<feature type="helix" evidence="16">
    <location>
        <begin position="358"/>
        <end position="360"/>
    </location>
</feature>
<feature type="turn" evidence="16">
    <location>
        <begin position="365"/>
        <end position="369"/>
    </location>
</feature>
<feature type="strand" evidence="16">
    <location>
        <begin position="370"/>
        <end position="372"/>
    </location>
</feature>
<feature type="strand" evidence="18">
    <location>
        <begin position="384"/>
        <end position="386"/>
    </location>
</feature>
<feature type="helix" evidence="16">
    <location>
        <begin position="389"/>
        <end position="392"/>
    </location>
</feature>
<feature type="strand" evidence="13">
    <location>
        <begin position="397"/>
        <end position="399"/>
    </location>
</feature>
<feature type="strand" evidence="16">
    <location>
        <begin position="401"/>
        <end position="403"/>
    </location>
</feature>
<feature type="helix" evidence="16">
    <location>
        <begin position="407"/>
        <end position="419"/>
    </location>
</feature>
<feature type="turn" evidence="16">
    <location>
        <begin position="425"/>
        <end position="427"/>
    </location>
</feature>
<feature type="turn" evidence="16">
    <location>
        <begin position="429"/>
        <end position="431"/>
    </location>
</feature>
<feature type="turn" evidence="16">
    <location>
        <begin position="435"/>
        <end position="437"/>
    </location>
</feature>
<feature type="helix" evidence="16">
    <location>
        <begin position="440"/>
        <end position="442"/>
    </location>
</feature>
<feature type="helix" evidence="16">
    <location>
        <begin position="452"/>
        <end position="461"/>
    </location>
</feature>
<feature type="turn" evidence="16">
    <location>
        <begin position="466"/>
        <end position="468"/>
    </location>
</feature>
<feature type="helix" evidence="16">
    <location>
        <begin position="472"/>
        <end position="484"/>
    </location>
</feature>
<feature type="helix" evidence="16">
    <location>
        <begin position="487"/>
        <end position="490"/>
    </location>
</feature>
<feature type="strand" evidence="15">
    <location>
        <begin position="491"/>
        <end position="493"/>
    </location>
</feature>
<feature type="helix" evidence="16">
    <location>
        <begin position="499"/>
        <end position="514"/>
    </location>
</feature>
<feature type="helix" evidence="16">
    <location>
        <begin position="543"/>
        <end position="553"/>
    </location>
</feature>
<feature type="helix" evidence="16">
    <location>
        <begin position="558"/>
        <end position="573"/>
    </location>
</feature>
<comment type="function">
    <text evidence="1 2 5 6 7">Acts as a serine/threonine-protein kinase (PubMed:22645651, PubMed:26161729, PubMed:29160309). Exhibits a substrate preference for proline at position P+1 and a general preference at several residues for basic residues such as arginine (By similarity). Also exhibits moderate preferences for a phosphotyrosine at position P-3 and a tryptophan at P-5 (By similarity). Critical to mitochondrial homeostasis it mediates several pathways that maintain mitochondrial health and function (By similarity) Protects against mitochondrial dysfunction during cellular stress by phosphorylating mitochondrial proteins such as park and likely Drp1, to coordinate mitochondrial quality control mechanisms that remove and replace dysfunctional mitochondrial components (PubMed:26161729). Depending on the severity of mitochondrial damage and/or dysfunction, activity ranges from preventing apoptosis and stimulating mitochondrial biogenesis to regulating mitochondrial dynamics and eliminating severely damaged mitochondria via mitophagy (By similarity). Appears to be particularly important in maintaining the physiology and function of cells with high energy demands that are undergoing stress or altered metabolic environment, including spermatids, muscle cells and neurons such as the dopaminergic (DA) neurons (By similarity). Mediates the translocation and activation of park at the outer membrane (OMM) of dysfunctional/depolarized mitochondria (PubMed:26161729). At the OMM of damaged mitochondria, phosphorylates pre-existing polyubiquitin chains, the Pink1-phosphorylated polyubiquitin then recruits park from the cytosol to the OMM where park is fully activated by phosphorylation at 'Ser-94' by Pink1 (By similarity). When cellular stress results in irreversible mitochondrial damage, functions with park to promote the clearance of dysfunctional and/or depolarized mitochondria by selective autophagy (mitophagy) (By similarity). The Pink1-park pathway also promotes fission and/or inhibits fusion of damaged mitochondria, by phosphorylating and thus promoting the park-dependent degradation of proteins involved in mitochondrial fusion/fission such as Marf, Opa1 and fzo (By similarity). This prevents the refusion of unhealthy mitochondria with the mitochondrial network or initiates mitochondrial fragmentation facilitating their later engulfment by autophagosomes (By similarity). Also likely to promote mitochondrial fission independently of park and Atg7-mediated mitophagy, via the phosphorylation and activation of Drp1 (By similarity). Regulates motility of damaged mitochondria by phosphorylating Miro which likely promotes its park-dependent degradation by the proteasome; in motor neurons, this inhibits mitochondrial intracellular anterograde transport along the axons which probably increases the chance of the mitochondria being eliminated in the soma (By similarity). The Pink1-park pathway is also involved in mitochondrial regeneration processes such as promoting mitochondrial biogenesis, activating localized mitochondrial repair, promoting selective turnover of mitochondrial proteins and initiating the mitochondrial import of endogenous proteins (By similarity). Involved in mitochondrial biogenesis by promoting the park-dependent ubiquitination of transcriptional repressor Paris which leads to its subsequent proteasomal degradation and allows activation of the transcription factor srl (By similarity). Functions with park to promote localized mitochondrial repair by activating the translation of specific nuclear-encoded mitochondrial RNAs (nc-mtRNAs) on the mitochondrial surface, including several key electron transport chain component nc-mtRNAs (By similarity). During oogenesis, phosphorylates and inactivates larp on the membrane of defective mitochondria, thus impairing local translation and mtDNA replication and consequently, reducing transmission of deleterious mtDNA mutations to the mature oocyte (By similarity). Phosphorylates the mitochondrial acyl-CoA dehydrogenase Mcad, and appears to be important for maintaining fatty acid and amino acid metabolism via a mechanism that is independent of it's role in maintaining production of ATP (By similarity).</text>
</comment>
<comment type="catalytic activity">
    <reaction evidence="5 7">
        <text>L-seryl-[protein] + ATP = O-phospho-L-seryl-[protein] + ADP + H(+)</text>
        <dbReference type="Rhea" id="RHEA:17989"/>
        <dbReference type="Rhea" id="RHEA-COMP:9863"/>
        <dbReference type="Rhea" id="RHEA-COMP:11604"/>
        <dbReference type="ChEBI" id="CHEBI:15378"/>
        <dbReference type="ChEBI" id="CHEBI:29999"/>
        <dbReference type="ChEBI" id="CHEBI:30616"/>
        <dbReference type="ChEBI" id="CHEBI:83421"/>
        <dbReference type="ChEBI" id="CHEBI:456216"/>
        <dbReference type="EC" id="2.7.11.1"/>
    </reaction>
</comment>
<comment type="catalytic activity">
    <reaction evidence="5 7">
        <text>L-threonyl-[protein] + ATP = O-phospho-L-threonyl-[protein] + ADP + H(+)</text>
        <dbReference type="Rhea" id="RHEA:46608"/>
        <dbReference type="Rhea" id="RHEA-COMP:11060"/>
        <dbReference type="Rhea" id="RHEA-COMP:11605"/>
        <dbReference type="ChEBI" id="CHEBI:15378"/>
        <dbReference type="ChEBI" id="CHEBI:30013"/>
        <dbReference type="ChEBI" id="CHEBI:30616"/>
        <dbReference type="ChEBI" id="CHEBI:61977"/>
        <dbReference type="ChEBI" id="CHEBI:456216"/>
        <dbReference type="EC" id="2.7.11.1"/>
    </reaction>
</comment>
<comment type="cofactor">
    <cofactor evidence="5 7">
        <name>Mg(2+)</name>
        <dbReference type="ChEBI" id="CHEBI:18420"/>
    </cofactor>
    <text evidence="1">Binds 2 Mg(2+) ions per subunit.</text>
</comment>
<comment type="subcellular location">
    <subcellularLocation>
        <location evidence="2">Mitochondrion outer membrane</location>
        <topology evidence="3">Single-pass membrane protein</topology>
    </subcellularLocation>
    <subcellularLocation>
        <location evidence="2">Mitochondrion inner membrane</location>
        <topology evidence="3">Single-pass membrane protein</topology>
    </subcellularLocation>
    <subcellularLocation>
        <location evidence="2">Cytoplasm</location>
        <location evidence="2">Cytosol</location>
    </subcellularLocation>
    <text evidence="2">Localizes mostly in mitochondrion, and the smaller proteolytic processed fragment localizes in the cytosol as well (By similarity). When mitochondria are damaged, defective and/or enriched with deleterious mtDNA mutations, Pink1 import is arrested which induces its accumulation on the outer mitochondrial membrane where it acquires kinase activity (By similarity).</text>
</comment>
<comment type="PTM">
    <text evidence="2">Proteolytically cleaved. In healthy cells, the precursor is continuously imported into mitochondria where it is proteolytically cleaved into its short form by the mitochondrial rhomboid protease rho-7 (8231301). The short form is then released into the cytosol where it rapidly undergoes proteasome-dependent degradation. In unhealthy cells, when cellular stress conditions lead to the loss of mitochondrial membrane potential, mitochondrial import is impaired leading to the precursor accumulating on the outer mitochondrial membrane (OMM).</text>
</comment>
<comment type="PTM">
    <text evidence="2 5 7">Autophosphorylated (PubMed:22645651, PubMed:29160309). Autophosphorylated on Ser-202, which activates kinase activity (PubMed:29160309). Loss of mitochondrial membrane potential results in the precursor accumulating on the outer mitochondrial membrane (OMM) where it is activated by autophosphorylation at Ser-202 (By similarity). Autophosphorylation is sufficient and essential for selective recruitment of park to depolarized mitochondria, likely via Pink1-dependent phosphorylation of polyubiquitin chains (By similarity). Also autophosphorylated at Ser-204 and Thr-305 (PubMed:29160309).</text>
</comment>
<comment type="similarity">
    <text evidence="9">Belongs to the protein kinase superfamily. Ser/Thr protein kinase family.</text>
</comment>
<name>PINK1_PEDHC</name>
<accession>E0W1I1</accession>
<dbReference type="EC" id="2.7.11.1" evidence="5 7"/>
<dbReference type="EMBL" id="AAZO01007021">
    <property type="status" value="NOT_ANNOTATED_CDS"/>
    <property type="molecule type" value="Genomic_DNA"/>
</dbReference>
<dbReference type="EMBL" id="DS235870">
    <property type="protein sequence ID" value="EEB19487.1"/>
    <property type="molecule type" value="Genomic_DNA"/>
</dbReference>
<dbReference type="RefSeq" id="XP_002432225.1">
    <property type="nucleotide sequence ID" value="XM_002432180.1"/>
</dbReference>
<dbReference type="PDB" id="6EQI">
    <property type="method" value="X-ray"/>
    <property type="resolution" value="3.10 A"/>
    <property type="chains" value="C=143-575"/>
</dbReference>
<dbReference type="PDB" id="7T3X">
    <property type="method" value="X-ray"/>
    <property type="resolution" value="3.53 A"/>
    <property type="chains" value="A=115-575"/>
</dbReference>
<dbReference type="PDB" id="7T4K">
    <property type="method" value="EM"/>
    <property type="resolution" value="3.25 A"/>
    <property type="chains" value="A/B=115-575"/>
</dbReference>
<dbReference type="PDB" id="7T4L">
    <property type="method" value="EM"/>
    <property type="resolution" value="3.28 A"/>
    <property type="chains" value="A/B=115-575"/>
</dbReference>
<dbReference type="PDB" id="7T4M">
    <property type="method" value="EM"/>
    <property type="resolution" value="2.48 A"/>
    <property type="chains" value="A/B/C/D/E/F/G/H/I/J/K/L=115-575"/>
</dbReference>
<dbReference type="PDB" id="7T4N">
    <property type="method" value="EM"/>
    <property type="resolution" value="2.35 A"/>
    <property type="chains" value="A/B=115-575"/>
</dbReference>
<dbReference type="PDB" id="8UYF">
    <property type="method" value="EM"/>
    <property type="resolution" value="2.75 A"/>
    <property type="chains" value="A/B=115-575"/>
</dbReference>
<dbReference type="PDB" id="8UYH">
    <property type="method" value="EM"/>
    <property type="resolution" value="2.84 A"/>
    <property type="chains" value="A/B=115-575"/>
</dbReference>
<dbReference type="PDB" id="8UYI">
    <property type="method" value="EM"/>
    <property type="resolution" value="3.13 A"/>
    <property type="chains" value="A/B=115-575"/>
</dbReference>
<dbReference type="PDBsum" id="6EQI"/>
<dbReference type="PDBsum" id="7T3X"/>
<dbReference type="PDBsum" id="7T4K"/>
<dbReference type="PDBsum" id="7T4L"/>
<dbReference type="PDBsum" id="7T4M"/>
<dbReference type="PDBsum" id="7T4N"/>
<dbReference type="PDBsum" id="8UYF"/>
<dbReference type="PDBsum" id="8UYH"/>
<dbReference type="PDBsum" id="8UYI"/>
<dbReference type="EMDB" id="EMD-25677"/>
<dbReference type="EMDB" id="EMD-25678"/>
<dbReference type="EMDB" id="EMD-25679"/>
<dbReference type="EMDB" id="EMD-25680"/>
<dbReference type="EMDB" id="EMD-25681"/>
<dbReference type="EMDB" id="EMD-42804"/>
<dbReference type="EMDB" id="EMD-42806"/>
<dbReference type="EMDB" id="EMD-42807"/>
<dbReference type="SMR" id="E0W1I1"/>
<dbReference type="FunCoup" id="E0W1I1">
    <property type="interactions" value="226"/>
</dbReference>
<dbReference type="STRING" id="121224.E0W1I1"/>
<dbReference type="iPTMnet" id="E0W1I1"/>
<dbReference type="ABCD" id="E0W1I1">
    <property type="antibodies" value="1 sequenced antibody"/>
</dbReference>
<dbReference type="EnsemblMetazoa" id="PHUM577390-RA">
    <property type="protein sequence ID" value="PHUM577390-PA"/>
    <property type="gene ID" value="PHUM577390"/>
</dbReference>
<dbReference type="GeneID" id="8239562"/>
<dbReference type="KEGG" id="phu:Phum_PHUM577390"/>
<dbReference type="CTD" id="8239562"/>
<dbReference type="VEuPathDB" id="VectorBase:PHUM577390"/>
<dbReference type="eggNOG" id="KOG4158">
    <property type="taxonomic scope" value="Eukaryota"/>
</dbReference>
<dbReference type="HOGENOM" id="CLU_022208_0_0_1"/>
<dbReference type="InParanoid" id="E0W1I1"/>
<dbReference type="OMA" id="FGQHARK"/>
<dbReference type="OrthoDB" id="1405469at2759"/>
<dbReference type="PhylomeDB" id="E0W1I1"/>
<dbReference type="Proteomes" id="UP000009046">
    <property type="component" value="Unassembled WGS sequence"/>
</dbReference>
<dbReference type="GO" id="GO:0005829">
    <property type="term" value="C:cytosol"/>
    <property type="evidence" value="ECO:0007669"/>
    <property type="project" value="UniProtKB-SubCell"/>
</dbReference>
<dbReference type="GO" id="GO:0005743">
    <property type="term" value="C:mitochondrial inner membrane"/>
    <property type="evidence" value="ECO:0007669"/>
    <property type="project" value="UniProtKB-SubCell"/>
</dbReference>
<dbReference type="GO" id="GO:0005741">
    <property type="term" value="C:mitochondrial outer membrane"/>
    <property type="evidence" value="ECO:0007669"/>
    <property type="project" value="UniProtKB-SubCell"/>
</dbReference>
<dbReference type="GO" id="GO:0005524">
    <property type="term" value="F:ATP binding"/>
    <property type="evidence" value="ECO:0007669"/>
    <property type="project" value="UniProtKB-KW"/>
</dbReference>
<dbReference type="GO" id="GO:0046872">
    <property type="term" value="F:metal ion binding"/>
    <property type="evidence" value="ECO:0007669"/>
    <property type="project" value="UniProtKB-KW"/>
</dbReference>
<dbReference type="GO" id="GO:0004672">
    <property type="term" value="F:protein kinase activity"/>
    <property type="evidence" value="ECO:0000314"/>
    <property type="project" value="UniProtKB"/>
</dbReference>
<dbReference type="GO" id="GO:0004674">
    <property type="term" value="F:protein serine/threonine kinase activity"/>
    <property type="evidence" value="ECO:0007669"/>
    <property type="project" value="UniProtKB-KW"/>
</dbReference>
<dbReference type="GO" id="GO:0000422">
    <property type="term" value="P:autophagy of mitochondrion"/>
    <property type="evidence" value="ECO:0007669"/>
    <property type="project" value="TreeGrafter"/>
</dbReference>
<dbReference type="GO" id="GO:0090141">
    <property type="term" value="P:positive regulation of mitochondrial fission"/>
    <property type="evidence" value="ECO:0007669"/>
    <property type="project" value="TreeGrafter"/>
</dbReference>
<dbReference type="GO" id="GO:0042981">
    <property type="term" value="P:regulation of apoptotic process"/>
    <property type="evidence" value="ECO:0007669"/>
    <property type="project" value="TreeGrafter"/>
</dbReference>
<dbReference type="Gene3D" id="1.10.510.10">
    <property type="entry name" value="Transferase(Phosphotransferase) domain 1"/>
    <property type="match status" value="1"/>
</dbReference>
<dbReference type="InterPro" id="IPR011009">
    <property type="entry name" value="Kinase-like_dom_sf"/>
</dbReference>
<dbReference type="InterPro" id="IPR051511">
    <property type="entry name" value="MitoQC_Scaffold_Kinases"/>
</dbReference>
<dbReference type="InterPro" id="IPR000719">
    <property type="entry name" value="Prot_kinase_dom"/>
</dbReference>
<dbReference type="InterPro" id="IPR008271">
    <property type="entry name" value="Ser/Thr_kinase_AS"/>
</dbReference>
<dbReference type="PANTHER" id="PTHR22972">
    <property type="entry name" value="SERINE/THREONINE PROTEIN KINASE"/>
    <property type="match status" value="1"/>
</dbReference>
<dbReference type="PANTHER" id="PTHR22972:SF7">
    <property type="entry name" value="SERINE_THREONINE-PROTEIN KINASE PINK1, MITOCHONDRIAL"/>
    <property type="match status" value="1"/>
</dbReference>
<dbReference type="Pfam" id="PF00069">
    <property type="entry name" value="Pkinase"/>
    <property type="match status" value="1"/>
</dbReference>
<dbReference type="SMART" id="SM00220">
    <property type="entry name" value="S_TKc"/>
    <property type="match status" value="1"/>
</dbReference>
<dbReference type="SUPFAM" id="SSF56112">
    <property type="entry name" value="Protein kinase-like (PK-like)"/>
    <property type="match status" value="1"/>
</dbReference>
<dbReference type="PROSITE" id="PS50011">
    <property type="entry name" value="PROTEIN_KINASE_DOM"/>
    <property type="match status" value="1"/>
</dbReference>
<dbReference type="PROSITE" id="PS00108">
    <property type="entry name" value="PROTEIN_KINASE_ST"/>
    <property type="match status" value="1"/>
</dbReference>